<protein>
    <recommendedName>
        <fullName evidence="1">Glucose-6-phosphate isomerase</fullName>
        <shortName evidence="1">GPI</shortName>
        <ecNumber evidence="1">5.3.1.9</ecNumber>
    </recommendedName>
    <alternativeName>
        <fullName evidence="1">Phosphoglucose isomerase</fullName>
        <shortName evidence="1">PGI</shortName>
    </alternativeName>
    <alternativeName>
        <fullName evidence="1">Phosphohexose isomerase</fullName>
        <shortName evidence="1">PHI</shortName>
    </alternativeName>
</protein>
<comment type="function">
    <text evidence="1">Catalyzes the reversible isomerization of glucose-6-phosphate to fructose-6-phosphate.</text>
</comment>
<comment type="catalytic activity">
    <reaction evidence="1">
        <text>alpha-D-glucose 6-phosphate = beta-D-fructose 6-phosphate</text>
        <dbReference type="Rhea" id="RHEA:11816"/>
        <dbReference type="ChEBI" id="CHEBI:57634"/>
        <dbReference type="ChEBI" id="CHEBI:58225"/>
        <dbReference type="EC" id="5.3.1.9"/>
    </reaction>
</comment>
<comment type="pathway">
    <text evidence="1">Carbohydrate biosynthesis; gluconeogenesis.</text>
</comment>
<comment type="pathway">
    <text evidence="1">Carbohydrate degradation; glycolysis; D-glyceraldehyde 3-phosphate and glycerone phosphate from D-glucose: step 2/4.</text>
</comment>
<comment type="subcellular location">
    <subcellularLocation>
        <location evidence="1">Cytoplasm</location>
    </subcellularLocation>
</comment>
<comment type="similarity">
    <text evidence="1">Belongs to the GPI family.</text>
</comment>
<proteinExistence type="inferred from homology"/>
<name>G6PI_PARPJ</name>
<keyword id="KW-0963">Cytoplasm</keyword>
<keyword id="KW-0312">Gluconeogenesis</keyword>
<keyword id="KW-0324">Glycolysis</keyword>
<keyword id="KW-0413">Isomerase</keyword>
<dbReference type="EC" id="5.3.1.9" evidence="1"/>
<dbReference type="EMBL" id="CP001052">
    <property type="protein sequence ID" value="ACD16322.1"/>
    <property type="molecule type" value="Genomic_DNA"/>
</dbReference>
<dbReference type="RefSeq" id="WP_012432922.1">
    <property type="nucleotide sequence ID" value="NC_010681.1"/>
</dbReference>
<dbReference type="SMR" id="B2T411"/>
<dbReference type="STRING" id="398527.Bphyt_1914"/>
<dbReference type="KEGG" id="bpy:Bphyt_1914"/>
<dbReference type="eggNOG" id="COG0166">
    <property type="taxonomic scope" value="Bacteria"/>
</dbReference>
<dbReference type="HOGENOM" id="CLU_017947_3_1_4"/>
<dbReference type="OrthoDB" id="140919at2"/>
<dbReference type="UniPathway" id="UPA00109">
    <property type="reaction ID" value="UER00181"/>
</dbReference>
<dbReference type="UniPathway" id="UPA00138"/>
<dbReference type="Proteomes" id="UP000001739">
    <property type="component" value="Chromosome 1"/>
</dbReference>
<dbReference type="GO" id="GO:0005829">
    <property type="term" value="C:cytosol"/>
    <property type="evidence" value="ECO:0007669"/>
    <property type="project" value="TreeGrafter"/>
</dbReference>
<dbReference type="GO" id="GO:0097367">
    <property type="term" value="F:carbohydrate derivative binding"/>
    <property type="evidence" value="ECO:0007669"/>
    <property type="project" value="InterPro"/>
</dbReference>
<dbReference type="GO" id="GO:0004347">
    <property type="term" value="F:glucose-6-phosphate isomerase activity"/>
    <property type="evidence" value="ECO:0007669"/>
    <property type="project" value="UniProtKB-UniRule"/>
</dbReference>
<dbReference type="GO" id="GO:0048029">
    <property type="term" value="F:monosaccharide binding"/>
    <property type="evidence" value="ECO:0007669"/>
    <property type="project" value="TreeGrafter"/>
</dbReference>
<dbReference type="GO" id="GO:0006094">
    <property type="term" value="P:gluconeogenesis"/>
    <property type="evidence" value="ECO:0007669"/>
    <property type="project" value="UniProtKB-UniRule"/>
</dbReference>
<dbReference type="GO" id="GO:0051156">
    <property type="term" value="P:glucose 6-phosphate metabolic process"/>
    <property type="evidence" value="ECO:0007669"/>
    <property type="project" value="TreeGrafter"/>
</dbReference>
<dbReference type="GO" id="GO:0006096">
    <property type="term" value="P:glycolytic process"/>
    <property type="evidence" value="ECO:0007669"/>
    <property type="project" value="UniProtKB-UniRule"/>
</dbReference>
<dbReference type="CDD" id="cd05015">
    <property type="entry name" value="SIS_PGI_1"/>
    <property type="match status" value="1"/>
</dbReference>
<dbReference type="CDD" id="cd05016">
    <property type="entry name" value="SIS_PGI_2"/>
    <property type="match status" value="1"/>
</dbReference>
<dbReference type="Gene3D" id="1.10.1390.10">
    <property type="match status" value="1"/>
</dbReference>
<dbReference type="Gene3D" id="3.40.50.10490">
    <property type="entry name" value="Glucose-6-phosphate isomerase like protein, domain 1"/>
    <property type="match status" value="2"/>
</dbReference>
<dbReference type="HAMAP" id="MF_00473">
    <property type="entry name" value="G6P_isomerase"/>
    <property type="match status" value="1"/>
</dbReference>
<dbReference type="InterPro" id="IPR001672">
    <property type="entry name" value="G6P_Isomerase"/>
</dbReference>
<dbReference type="InterPro" id="IPR023096">
    <property type="entry name" value="G6P_Isomerase_C"/>
</dbReference>
<dbReference type="InterPro" id="IPR018189">
    <property type="entry name" value="Phosphoglucose_isomerase_CS"/>
</dbReference>
<dbReference type="InterPro" id="IPR046348">
    <property type="entry name" value="SIS_dom_sf"/>
</dbReference>
<dbReference type="InterPro" id="IPR035476">
    <property type="entry name" value="SIS_PGI_1"/>
</dbReference>
<dbReference type="InterPro" id="IPR035482">
    <property type="entry name" value="SIS_PGI_2"/>
</dbReference>
<dbReference type="NCBIfam" id="NF001211">
    <property type="entry name" value="PRK00179.1"/>
    <property type="match status" value="1"/>
</dbReference>
<dbReference type="PANTHER" id="PTHR11469">
    <property type="entry name" value="GLUCOSE-6-PHOSPHATE ISOMERASE"/>
    <property type="match status" value="1"/>
</dbReference>
<dbReference type="PANTHER" id="PTHR11469:SF1">
    <property type="entry name" value="GLUCOSE-6-PHOSPHATE ISOMERASE"/>
    <property type="match status" value="1"/>
</dbReference>
<dbReference type="Pfam" id="PF00342">
    <property type="entry name" value="PGI"/>
    <property type="match status" value="1"/>
</dbReference>
<dbReference type="PRINTS" id="PR00662">
    <property type="entry name" value="G6PISOMERASE"/>
</dbReference>
<dbReference type="SUPFAM" id="SSF53697">
    <property type="entry name" value="SIS domain"/>
    <property type="match status" value="1"/>
</dbReference>
<dbReference type="PROSITE" id="PS00765">
    <property type="entry name" value="P_GLUCOSE_ISOMERASE_1"/>
    <property type="match status" value="1"/>
</dbReference>
<dbReference type="PROSITE" id="PS00174">
    <property type="entry name" value="P_GLUCOSE_ISOMERASE_2"/>
    <property type="match status" value="1"/>
</dbReference>
<dbReference type="PROSITE" id="PS51463">
    <property type="entry name" value="P_GLUCOSE_ISOMERASE_3"/>
    <property type="match status" value="1"/>
</dbReference>
<organism>
    <name type="scientific">Paraburkholderia phytofirmans (strain DSM 17436 / LMG 22146 / PsJN)</name>
    <name type="common">Burkholderia phytofirmans</name>
    <dbReference type="NCBI Taxonomy" id="398527"/>
    <lineage>
        <taxon>Bacteria</taxon>
        <taxon>Pseudomonadati</taxon>
        <taxon>Pseudomonadota</taxon>
        <taxon>Betaproteobacteria</taxon>
        <taxon>Burkholderiales</taxon>
        <taxon>Burkholderiaceae</taxon>
        <taxon>Paraburkholderia</taxon>
    </lineage>
</organism>
<accession>B2T411</accession>
<evidence type="ECO:0000255" key="1">
    <source>
        <dbReference type="HAMAP-Rule" id="MF_00473"/>
    </source>
</evidence>
<gene>
    <name evidence="1" type="primary">pgi</name>
    <name type="ordered locus">Bphyt_1914</name>
</gene>
<reference key="1">
    <citation type="journal article" date="2011" name="J. Bacteriol.">
        <title>Complete genome sequence of the plant growth-promoting endophyte Burkholderia phytofirmans strain PsJN.</title>
        <authorList>
            <person name="Weilharter A."/>
            <person name="Mitter B."/>
            <person name="Shin M.V."/>
            <person name="Chain P.S."/>
            <person name="Nowak J."/>
            <person name="Sessitsch A."/>
        </authorList>
    </citation>
    <scope>NUCLEOTIDE SEQUENCE [LARGE SCALE GENOMIC DNA]</scope>
    <source>
        <strain>DSM 17436 / LMG 22146 / PsJN</strain>
    </source>
</reference>
<feature type="chain" id="PRO_1000125704" description="Glucose-6-phosphate isomerase">
    <location>
        <begin position="1"/>
        <end position="540"/>
    </location>
</feature>
<feature type="active site" description="Proton donor" evidence="1">
    <location>
        <position position="350"/>
    </location>
</feature>
<feature type="active site" evidence="1">
    <location>
        <position position="381"/>
    </location>
</feature>
<feature type="active site" evidence="1">
    <location>
        <position position="503"/>
    </location>
</feature>
<sequence>MTQNSLPSWSSLQTHYDKIRDAHMRDWFAPENDPAPTRAERFAFAGGGLAADFSKNRITEETLKLLVQVAREAGVEKRRDAMFAGDIVNPTEGRAVLHTALRATDPKAPFYAQVQAERKKMAVFADQVRSGEWKGYTGKRIRYVVNIGIGGSDLGPKMVVHALHHLATPEITTHFVSNVDGADLYNVMQQIDPEETLAIIVSKTFTTLETMTNARSLRDWFIEKGCPESALAKHFVGVSANPAEVVKFGIAKENVFEMWDWVGGRYSLWSAVGLSIMIAIGPKQFDELLAGANEMDQHFRDAPLEKNLPVLLGMIGIWYRNFFGSQSYLVAPYSQALHFLPSYLQQLEMESNGKSARLDGAMVDYPTAAVTWGEPGTNGQHAFFQMLHQGPTIVPIDFIAVLTPEHPLVSHHPKLLANCFAQSEALMVGRTLEEAKKVAGADKPELAPHLVFPGNRPTTTLLVDALTARSLGALIALYEHKVLVQGTVWNINSFDQWGVELGKILGKVVEADLTAPSADVKKHDSSTSALIARARAALKK</sequence>